<keyword id="KW-0687">Ribonucleoprotein</keyword>
<keyword id="KW-0689">Ribosomal protein</keyword>
<keyword id="KW-0694">RNA-binding</keyword>
<keyword id="KW-0699">rRNA-binding</keyword>
<evidence type="ECO:0000255" key="1">
    <source>
        <dbReference type="HAMAP-Rule" id="MF_00382"/>
    </source>
</evidence>
<evidence type="ECO:0000305" key="2"/>
<reference key="1">
    <citation type="journal article" date="2006" name="PLoS Biol.">
        <title>The genome of deep-sea vent chemolithoautotroph Thiomicrospira crunogena XCL-2.</title>
        <authorList>
            <person name="Scott K.M."/>
            <person name="Sievert S.M."/>
            <person name="Abril F.N."/>
            <person name="Ball L.A."/>
            <person name="Barrett C.J."/>
            <person name="Blake R.A."/>
            <person name="Boller A.J."/>
            <person name="Chain P.S.G."/>
            <person name="Clark J.A."/>
            <person name="Davis C.R."/>
            <person name="Detter C."/>
            <person name="Do K.F."/>
            <person name="Dobrinski K.P."/>
            <person name="Faza B.I."/>
            <person name="Fitzpatrick K.A."/>
            <person name="Freyermuth S.K."/>
            <person name="Harmer T.L."/>
            <person name="Hauser L.J."/>
            <person name="Huegler M."/>
            <person name="Kerfeld C.A."/>
            <person name="Klotz M.G."/>
            <person name="Kong W.W."/>
            <person name="Land M."/>
            <person name="Lapidus A."/>
            <person name="Larimer F.W."/>
            <person name="Longo D.L."/>
            <person name="Lucas S."/>
            <person name="Malfatti S.A."/>
            <person name="Massey S.E."/>
            <person name="Martin D.D."/>
            <person name="McCuddin Z."/>
            <person name="Meyer F."/>
            <person name="Moore J.L."/>
            <person name="Ocampo L.H. Jr."/>
            <person name="Paul J.H."/>
            <person name="Paulsen I.T."/>
            <person name="Reep D.K."/>
            <person name="Ren Q."/>
            <person name="Ross R.L."/>
            <person name="Sato P.Y."/>
            <person name="Thomas P."/>
            <person name="Tinkham L.E."/>
            <person name="Zeruth G.T."/>
        </authorList>
    </citation>
    <scope>NUCLEOTIDE SEQUENCE [LARGE SCALE GENOMIC DNA]</scope>
    <source>
        <strain>DSM 25203 / XCL-2</strain>
    </source>
</reference>
<gene>
    <name evidence="1" type="primary">rplT</name>
    <name type="ordered locus">Tcr_1664</name>
</gene>
<comment type="function">
    <text evidence="1">Binds directly to 23S ribosomal RNA and is necessary for the in vitro assembly process of the 50S ribosomal subunit. It is not involved in the protein synthesizing functions of that subunit.</text>
</comment>
<comment type="similarity">
    <text evidence="1">Belongs to the bacterial ribosomal protein bL20 family.</text>
</comment>
<sequence>MARVKRGVIARKRHNKVLKQAKGYYGARKKIFRVAKQAVIKAGQYAYRDRRNKKRQFRRLWIARINAAARLNGMTYSRFISGLNKAGVEVDRKVLSDIAVHDAAAFSAIVEKAKAALA</sequence>
<protein>
    <recommendedName>
        <fullName evidence="1">Large ribosomal subunit protein bL20</fullName>
    </recommendedName>
    <alternativeName>
        <fullName evidence="2">50S ribosomal protein L20</fullName>
    </alternativeName>
</protein>
<feature type="chain" id="PRO_0000243754" description="Large ribosomal subunit protein bL20">
    <location>
        <begin position="1"/>
        <end position="118"/>
    </location>
</feature>
<dbReference type="EMBL" id="CP000109">
    <property type="protein sequence ID" value="ABB42256.1"/>
    <property type="molecule type" value="Genomic_DNA"/>
</dbReference>
<dbReference type="SMR" id="Q31F17"/>
<dbReference type="STRING" id="317025.Tcr_1664"/>
<dbReference type="KEGG" id="tcx:Tcr_1664"/>
<dbReference type="eggNOG" id="COG0292">
    <property type="taxonomic scope" value="Bacteria"/>
</dbReference>
<dbReference type="HOGENOM" id="CLU_123265_0_1_6"/>
<dbReference type="OrthoDB" id="9808966at2"/>
<dbReference type="GO" id="GO:1990904">
    <property type="term" value="C:ribonucleoprotein complex"/>
    <property type="evidence" value="ECO:0007669"/>
    <property type="project" value="UniProtKB-KW"/>
</dbReference>
<dbReference type="GO" id="GO:0005840">
    <property type="term" value="C:ribosome"/>
    <property type="evidence" value="ECO:0007669"/>
    <property type="project" value="UniProtKB-KW"/>
</dbReference>
<dbReference type="GO" id="GO:0019843">
    <property type="term" value="F:rRNA binding"/>
    <property type="evidence" value="ECO:0007669"/>
    <property type="project" value="UniProtKB-UniRule"/>
</dbReference>
<dbReference type="GO" id="GO:0003735">
    <property type="term" value="F:structural constituent of ribosome"/>
    <property type="evidence" value="ECO:0007669"/>
    <property type="project" value="InterPro"/>
</dbReference>
<dbReference type="GO" id="GO:0000027">
    <property type="term" value="P:ribosomal large subunit assembly"/>
    <property type="evidence" value="ECO:0007669"/>
    <property type="project" value="UniProtKB-UniRule"/>
</dbReference>
<dbReference type="GO" id="GO:0006412">
    <property type="term" value="P:translation"/>
    <property type="evidence" value="ECO:0007669"/>
    <property type="project" value="InterPro"/>
</dbReference>
<dbReference type="CDD" id="cd07026">
    <property type="entry name" value="Ribosomal_L20"/>
    <property type="match status" value="1"/>
</dbReference>
<dbReference type="FunFam" id="1.10.1900.20:FF:000001">
    <property type="entry name" value="50S ribosomal protein L20"/>
    <property type="match status" value="1"/>
</dbReference>
<dbReference type="Gene3D" id="6.10.160.10">
    <property type="match status" value="1"/>
</dbReference>
<dbReference type="Gene3D" id="1.10.1900.20">
    <property type="entry name" value="Ribosomal protein L20"/>
    <property type="match status" value="1"/>
</dbReference>
<dbReference type="HAMAP" id="MF_00382">
    <property type="entry name" value="Ribosomal_bL20"/>
    <property type="match status" value="1"/>
</dbReference>
<dbReference type="InterPro" id="IPR005813">
    <property type="entry name" value="Ribosomal_bL20"/>
</dbReference>
<dbReference type="InterPro" id="IPR049946">
    <property type="entry name" value="RIBOSOMAL_L20_CS"/>
</dbReference>
<dbReference type="InterPro" id="IPR035566">
    <property type="entry name" value="Ribosomal_protein_bL20_C"/>
</dbReference>
<dbReference type="NCBIfam" id="TIGR01032">
    <property type="entry name" value="rplT_bact"/>
    <property type="match status" value="1"/>
</dbReference>
<dbReference type="PANTHER" id="PTHR10986">
    <property type="entry name" value="39S RIBOSOMAL PROTEIN L20"/>
    <property type="match status" value="1"/>
</dbReference>
<dbReference type="Pfam" id="PF00453">
    <property type="entry name" value="Ribosomal_L20"/>
    <property type="match status" value="1"/>
</dbReference>
<dbReference type="PRINTS" id="PR00062">
    <property type="entry name" value="RIBOSOMALL20"/>
</dbReference>
<dbReference type="SUPFAM" id="SSF74731">
    <property type="entry name" value="Ribosomal protein L20"/>
    <property type="match status" value="1"/>
</dbReference>
<dbReference type="PROSITE" id="PS00937">
    <property type="entry name" value="RIBOSOMAL_L20"/>
    <property type="match status" value="1"/>
</dbReference>
<organism>
    <name type="scientific">Hydrogenovibrio crunogenus (strain DSM 25203 / XCL-2)</name>
    <name type="common">Thiomicrospira crunogena</name>
    <dbReference type="NCBI Taxonomy" id="317025"/>
    <lineage>
        <taxon>Bacteria</taxon>
        <taxon>Pseudomonadati</taxon>
        <taxon>Pseudomonadota</taxon>
        <taxon>Gammaproteobacteria</taxon>
        <taxon>Thiotrichales</taxon>
        <taxon>Piscirickettsiaceae</taxon>
        <taxon>Hydrogenovibrio</taxon>
    </lineage>
</organism>
<accession>Q31F17</accession>
<name>RL20_HYDCU</name>
<proteinExistence type="inferred from homology"/>